<evidence type="ECO:0000255" key="1">
    <source>
        <dbReference type="HAMAP-Rule" id="MF_00762"/>
    </source>
</evidence>
<evidence type="ECO:0000305" key="2"/>
<sequence>MEMTNAQRLILSNQYFLMSQLDPNNANKYKRLQTIVERGYELHMRELNREFGCLPETECREIIDIMEMYHAMQESNRMLDDAARKDVDQRRLTFLGFDMATEAQLVNYVRFLVDSEGLYPQFDKGEHHFNSQMPMLAKYRRMLTTWRNCPRQYHLSGNELRQIMNA</sequence>
<reference key="1">
    <citation type="journal article" date="2000" name="Nature">
        <title>DNA sequence of both chromosomes of the cholera pathogen Vibrio cholerae.</title>
        <authorList>
            <person name="Heidelberg J.F."/>
            <person name="Eisen J.A."/>
            <person name="Nelson W.C."/>
            <person name="Clayton R.A."/>
            <person name="Gwinn M.L."/>
            <person name="Dodson R.J."/>
            <person name="Haft D.H."/>
            <person name="Hickey E.K."/>
            <person name="Peterson J.D."/>
            <person name="Umayam L.A."/>
            <person name="Gill S.R."/>
            <person name="Nelson K.E."/>
            <person name="Read T.D."/>
            <person name="Tettelin H."/>
            <person name="Richardson D.L."/>
            <person name="Ermolaeva M.D."/>
            <person name="Vamathevan J.J."/>
            <person name="Bass S."/>
            <person name="Qin H."/>
            <person name="Dragoi I."/>
            <person name="Sellers P."/>
            <person name="McDonald L.A."/>
            <person name="Utterback T.R."/>
            <person name="Fleischmann R.D."/>
            <person name="Nierman W.C."/>
            <person name="White O."/>
            <person name="Salzberg S.L."/>
            <person name="Smith H.O."/>
            <person name="Colwell R.R."/>
            <person name="Mekalanos J.J."/>
            <person name="Venter J.C."/>
            <person name="Fraser C.M."/>
        </authorList>
    </citation>
    <scope>NUCLEOTIDE SEQUENCE [LARGE SCALE GENOMIC DNA]</scope>
    <source>
        <strain>ATCC 39315 / El Tor Inaba N16961</strain>
    </source>
</reference>
<keyword id="KW-1185">Reference proteome</keyword>
<dbReference type="EMBL" id="AE003852">
    <property type="protein sequence ID" value="AAF95019.1"/>
    <property type="status" value="ALT_INIT"/>
    <property type="molecule type" value="Genomic_DNA"/>
</dbReference>
<dbReference type="PIR" id="E82145">
    <property type="entry name" value="E82145"/>
</dbReference>
<dbReference type="RefSeq" id="NP_231505.2">
    <property type="nucleotide sequence ID" value="NC_002505.1"/>
</dbReference>
<dbReference type="RefSeq" id="WP_000426107.1">
    <property type="nucleotide sequence ID" value="NZ_LT906614.1"/>
</dbReference>
<dbReference type="SMR" id="Q9KQX6"/>
<dbReference type="STRING" id="243277.VC_1871"/>
<dbReference type="DNASU" id="2613625"/>
<dbReference type="EnsemblBacteria" id="AAF95019">
    <property type="protein sequence ID" value="AAF95019"/>
    <property type="gene ID" value="VC_1871"/>
</dbReference>
<dbReference type="KEGG" id="vch:VC_1871"/>
<dbReference type="PATRIC" id="fig|243277.26.peg.1787"/>
<dbReference type="eggNOG" id="COG3013">
    <property type="taxonomic scope" value="Bacteria"/>
</dbReference>
<dbReference type="HOGENOM" id="CLU_101021_1_0_6"/>
<dbReference type="Proteomes" id="UP000000584">
    <property type="component" value="Chromosome 1"/>
</dbReference>
<dbReference type="Gene3D" id="1.10.287.680">
    <property type="entry name" value="Helix hairpin bin"/>
    <property type="match status" value="1"/>
</dbReference>
<dbReference type="Gene3D" id="1.10.3190.10">
    <property type="entry name" value="yfbu gene product, domain 2"/>
    <property type="match status" value="1"/>
</dbReference>
<dbReference type="HAMAP" id="MF_00762">
    <property type="entry name" value="UPF0304"/>
    <property type="match status" value="1"/>
</dbReference>
<dbReference type="InterPro" id="IPR005587">
    <property type="entry name" value="UPF0304_YfbU"/>
</dbReference>
<dbReference type="InterPro" id="IPR023146">
    <property type="entry name" value="YfbU_alpha-helical_sf"/>
</dbReference>
<dbReference type="InterPro" id="IPR023145">
    <property type="entry name" value="YfbU_helix-hairpin_sf"/>
</dbReference>
<dbReference type="NCBIfam" id="NF003936">
    <property type="entry name" value="PRK05445.1"/>
    <property type="match status" value="1"/>
</dbReference>
<dbReference type="Pfam" id="PF03887">
    <property type="entry name" value="YfbU"/>
    <property type="match status" value="1"/>
</dbReference>
<dbReference type="PIRSF" id="PIRSF006272">
    <property type="entry name" value="UCP006272"/>
    <property type="match status" value="1"/>
</dbReference>
<dbReference type="SUPFAM" id="SSF116960">
    <property type="entry name" value="YfbU-like"/>
    <property type="match status" value="1"/>
</dbReference>
<organism>
    <name type="scientific">Vibrio cholerae serotype O1 (strain ATCC 39315 / El Tor Inaba N16961)</name>
    <dbReference type="NCBI Taxonomy" id="243277"/>
    <lineage>
        <taxon>Bacteria</taxon>
        <taxon>Pseudomonadati</taxon>
        <taxon>Pseudomonadota</taxon>
        <taxon>Gammaproteobacteria</taxon>
        <taxon>Vibrionales</taxon>
        <taxon>Vibrionaceae</taxon>
        <taxon>Vibrio</taxon>
    </lineage>
</organism>
<gene>
    <name type="ordered locus">VC_1871</name>
</gene>
<comment type="similarity">
    <text evidence="1">Belongs to the UPF0304 family.</text>
</comment>
<comment type="sequence caution" evidence="2">
    <conflict type="erroneous initiation">
        <sequence resource="EMBL-CDS" id="AAF95019"/>
    </conflict>
</comment>
<proteinExistence type="inferred from homology"/>
<protein>
    <recommendedName>
        <fullName evidence="1">UPF0304 protein VC_1871</fullName>
    </recommendedName>
</protein>
<name>Y1871_VIBCH</name>
<accession>Q9KQX6</accession>
<feature type="chain" id="PRO_0000218170" description="UPF0304 protein VC_1871">
    <location>
        <begin position="1"/>
        <end position="166"/>
    </location>
</feature>